<evidence type="ECO:0000255" key="1">
    <source>
        <dbReference type="HAMAP-Rule" id="MF_01556"/>
    </source>
</evidence>
<dbReference type="EC" id="5.3.1.26" evidence="1"/>
<dbReference type="EMBL" id="AE004092">
    <property type="protein sequence ID" value="AAK34625.1"/>
    <property type="molecule type" value="Genomic_DNA"/>
</dbReference>
<dbReference type="EMBL" id="CP000017">
    <property type="protein sequence ID" value="AAZ52255.1"/>
    <property type="molecule type" value="Genomic_DNA"/>
</dbReference>
<dbReference type="RefSeq" id="NP_269904.1">
    <property type="nucleotide sequence ID" value="NC_002737.2"/>
</dbReference>
<dbReference type="SMR" id="Q99Y13"/>
<dbReference type="PaxDb" id="1314-HKU360_01760"/>
<dbReference type="KEGG" id="spy:SPy_1922"/>
<dbReference type="KEGG" id="spz:M5005_Spy1637"/>
<dbReference type="PATRIC" id="fig|160490.10.peg.1670"/>
<dbReference type="HOGENOM" id="CLU_091396_2_0_9"/>
<dbReference type="OMA" id="DDRVDYP"/>
<dbReference type="UniPathway" id="UPA00702">
    <property type="reaction ID" value="UER00714"/>
</dbReference>
<dbReference type="Proteomes" id="UP000000750">
    <property type="component" value="Chromosome"/>
</dbReference>
<dbReference type="GO" id="GO:0050044">
    <property type="term" value="F:galactose-6-phosphate isomerase activity"/>
    <property type="evidence" value="ECO:0007669"/>
    <property type="project" value="UniProtKB-UniRule"/>
</dbReference>
<dbReference type="GO" id="GO:0004751">
    <property type="term" value="F:ribose-5-phosphate isomerase activity"/>
    <property type="evidence" value="ECO:0007669"/>
    <property type="project" value="TreeGrafter"/>
</dbReference>
<dbReference type="GO" id="GO:0019316">
    <property type="term" value="P:D-allose catabolic process"/>
    <property type="evidence" value="ECO:0007669"/>
    <property type="project" value="TreeGrafter"/>
</dbReference>
<dbReference type="GO" id="GO:0019388">
    <property type="term" value="P:galactose catabolic process"/>
    <property type="evidence" value="ECO:0007669"/>
    <property type="project" value="UniProtKB-UniPathway"/>
</dbReference>
<dbReference type="GO" id="GO:0019512">
    <property type="term" value="P:lactose catabolic process via tagatose-6-phosphate"/>
    <property type="evidence" value="ECO:0007669"/>
    <property type="project" value="UniProtKB-UniRule"/>
</dbReference>
<dbReference type="GO" id="GO:0009052">
    <property type="term" value="P:pentose-phosphate shunt, non-oxidative branch"/>
    <property type="evidence" value="ECO:0007669"/>
    <property type="project" value="TreeGrafter"/>
</dbReference>
<dbReference type="Gene3D" id="3.40.1400.10">
    <property type="entry name" value="Sugar-phosphate isomerase, RpiB/LacA/LacB"/>
    <property type="match status" value="1"/>
</dbReference>
<dbReference type="HAMAP" id="MF_01556">
    <property type="entry name" value="LacB"/>
    <property type="match status" value="1"/>
</dbReference>
<dbReference type="InterPro" id="IPR004784">
    <property type="entry name" value="LacB"/>
</dbReference>
<dbReference type="InterPro" id="IPR003500">
    <property type="entry name" value="RpiB_LacA_LacB"/>
</dbReference>
<dbReference type="InterPro" id="IPR036569">
    <property type="entry name" value="RpiB_LacA_LacB_sf"/>
</dbReference>
<dbReference type="NCBIfam" id="NF004051">
    <property type="entry name" value="PRK05571.1"/>
    <property type="match status" value="1"/>
</dbReference>
<dbReference type="NCBIfam" id="NF006381">
    <property type="entry name" value="PRK08622.1"/>
    <property type="match status" value="1"/>
</dbReference>
<dbReference type="NCBIfam" id="TIGR00689">
    <property type="entry name" value="rpiB_lacA_lacB"/>
    <property type="match status" value="1"/>
</dbReference>
<dbReference type="PANTHER" id="PTHR30345:SF0">
    <property type="entry name" value="DNA DAMAGE-REPAIR_TOLERATION PROTEIN DRT102"/>
    <property type="match status" value="1"/>
</dbReference>
<dbReference type="PANTHER" id="PTHR30345">
    <property type="entry name" value="RIBOSE-5-PHOSPHATE ISOMERASE B"/>
    <property type="match status" value="1"/>
</dbReference>
<dbReference type="Pfam" id="PF02502">
    <property type="entry name" value="LacAB_rpiB"/>
    <property type="match status" value="1"/>
</dbReference>
<dbReference type="PIRSF" id="PIRSF005384">
    <property type="entry name" value="RpiB_LacA_B"/>
    <property type="match status" value="1"/>
</dbReference>
<dbReference type="SUPFAM" id="SSF89623">
    <property type="entry name" value="Ribose/Galactose isomerase RpiB/AlsB"/>
    <property type="match status" value="1"/>
</dbReference>
<reference key="1">
    <citation type="journal article" date="2001" name="Proc. Natl. Acad. Sci. U.S.A.">
        <title>Complete genome sequence of an M1 strain of Streptococcus pyogenes.</title>
        <authorList>
            <person name="Ferretti J.J."/>
            <person name="McShan W.M."/>
            <person name="Ajdic D.J."/>
            <person name="Savic D.J."/>
            <person name="Savic G."/>
            <person name="Lyon K."/>
            <person name="Primeaux C."/>
            <person name="Sezate S."/>
            <person name="Suvorov A.N."/>
            <person name="Kenton S."/>
            <person name="Lai H.S."/>
            <person name="Lin S.P."/>
            <person name="Qian Y."/>
            <person name="Jia H.G."/>
            <person name="Najar F.Z."/>
            <person name="Ren Q."/>
            <person name="Zhu H."/>
            <person name="Song L."/>
            <person name="White J."/>
            <person name="Yuan X."/>
            <person name="Clifton S.W."/>
            <person name="Roe B.A."/>
            <person name="McLaughlin R.E."/>
        </authorList>
    </citation>
    <scope>NUCLEOTIDE SEQUENCE [LARGE SCALE GENOMIC DNA]</scope>
    <source>
        <strain>ATCC 700294 / SF370 / Serotype M1</strain>
    </source>
</reference>
<reference key="2">
    <citation type="journal article" date="2005" name="J. Infect. Dis.">
        <title>Evolutionary origin and emergence of a highly successful clone of serotype M1 group A Streptococcus involved multiple horizontal gene transfer events.</title>
        <authorList>
            <person name="Sumby P."/>
            <person name="Porcella S.F."/>
            <person name="Madrigal A.G."/>
            <person name="Barbian K.D."/>
            <person name="Virtaneva K."/>
            <person name="Ricklefs S.M."/>
            <person name="Sturdevant D.E."/>
            <person name="Graham M.R."/>
            <person name="Vuopio-Varkila J."/>
            <person name="Hoe N.P."/>
            <person name="Musser J.M."/>
        </authorList>
    </citation>
    <scope>NUCLEOTIDE SEQUENCE [LARGE SCALE GENOMIC DNA]</scope>
    <source>
        <strain>ATCC BAA-947 / MGAS5005 / Serotype M1</strain>
    </source>
</reference>
<keyword id="KW-0413">Isomerase</keyword>
<keyword id="KW-0423">Lactose metabolism</keyword>
<keyword id="KW-1185">Reference proteome</keyword>
<sequence>MKIAVGCDHIVTYEKIAVVDYLKSQGHKVIDCGTYDNVRTHYPIFGKKVGEAVASGEAELGVVICGTGVGITNAVNKVPGIRSALVRDMTSAIYSKEELNANVIGFGGKIIGGLLMNDIIDAFLAAEYKPTEENKKWIEKMDSLQHASQDQNNPHFFDEFLEKWDRGEYHD</sequence>
<accession>Q99Y13</accession>
<accession>Q48WM0</accession>
<name>LACB2_STRP1</name>
<proteinExistence type="inferred from homology"/>
<protein>
    <recommendedName>
        <fullName evidence="1">Galactose-6-phosphate isomerase subunit LacB 2</fullName>
        <ecNumber evidence="1">5.3.1.26</ecNumber>
    </recommendedName>
</protein>
<feature type="chain" id="PRO_0000208154" description="Galactose-6-phosphate isomerase subunit LacB 2">
    <location>
        <begin position="1"/>
        <end position="171"/>
    </location>
</feature>
<organism>
    <name type="scientific">Streptococcus pyogenes serotype M1</name>
    <dbReference type="NCBI Taxonomy" id="301447"/>
    <lineage>
        <taxon>Bacteria</taxon>
        <taxon>Bacillati</taxon>
        <taxon>Bacillota</taxon>
        <taxon>Bacilli</taxon>
        <taxon>Lactobacillales</taxon>
        <taxon>Streptococcaceae</taxon>
        <taxon>Streptococcus</taxon>
    </lineage>
</organism>
<comment type="catalytic activity">
    <reaction evidence="1">
        <text>aldehydo-D-galactose 6-phosphate = keto-D-tagatose 6-phosphate</text>
        <dbReference type="Rhea" id="RHEA:13033"/>
        <dbReference type="ChEBI" id="CHEBI:58255"/>
        <dbReference type="ChEBI" id="CHEBI:134283"/>
        <dbReference type="EC" id="5.3.1.26"/>
    </reaction>
</comment>
<comment type="pathway">
    <text evidence="1">Carbohydrate metabolism; D-galactose 6-phosphate degradation; D-tagatose 6-phosphate from D-galactose 6-phosphate: step 1/1.</text>
</comment>
<comment type="subunit">
    <text evidence="1">Heteromultimeric protein consisting of LacA and LacB.</text>
</comment>
<comment type="similarity">
    <text evidence="1">Belongs to the LacAB/RpiB family.</text>
</comment>
<gene>
    <name evidence="1" type="primary">lacB2</name>
    <name type="synonym">lacB.2</name>
    <name type="ordered locus">SPy_1922</name>
    <name type="ordered locus">M5005_Spy1637</name>
</gene>